<comment type="function">
    <text evidence="1">Catalyzes the reversible transfer of the terminal phosphate group between ATP and AMP. Plays an important role in cellular energy homeostasis and in adenine nucleotide metabolism.</text>
</comment>
<comment type="catalytic activity">
    <reaction evidence="1">
        <text>AMP + ATP = 2 ADP</text>
        <dbReference type="Rhea" id="RHEA:12973"/>
        <dbReference type="ChEBI" id="CHEBI:30616"/>
        <dbReference type="ChEBI" id="CHEBI:456215"/>
        <dbReference type="ChEBI" id="CHEBI:456216"/>
        <dbReference type="EC" id="2.7.4.3"/>
    </reaction>
</comment>
<comment type="pathway">
    <text evidence="1">Purine metabolism; AMP biosynthesis via salvage pathway; AMP from ADP: step 1/1.</text>
</comment>
<comment type="subunit">
    <text evidence="1">Monomer.</text>
</comment>
<comment type="subcellular location">
    <subcellularLocation>
        <location evidence="1">Cytoplasm</location>
    </subcellularLocation>
</comment>
<comment type="domain">
    <text evidence="1">Consists of three domains, a large central CORE domain and two small peripheral domains, NMPbind and LID, which undergo movements during catalysis. The LID domain closes over the site of phosphoryl transfer upon ATP binding. Assembling and dissambling the active center during each catalytic cycle provides an effective means to prevent ATP hydrolysis.</text>
</comment>
<comment type="similarity">
    <text evidence="1">Belongs to the adenylate kinase family.</text>
</comment>
<comment type="sequence caution" evidence="2">
    <conflict type="erroneous initiation">
        <sequence resource="EMBL-CDS" id="CAD75619"/>
    </conflict>
</comment>
<proteinExistence type="inferred from homology"/>
<sequence length="192" mass="21424">MRIVFIGPPGAGKGTQCELLSKALKVPHIGTGGMLRALEPESGEQIHLRIDRGHFAPDDFVLQMVAERLSQPDSRTGYLLDGFPRTQVQASAFDKQLVAASLKLDHVLHLQVSADVLIERLRKRGETENRADDSEEFIRERFRIYEDRTAPLLDHYRCQGLVRDIDASDSESLVHASICECLNFTLASPAES</sequence>
<protein>
    <recommendedName>
        <fullName evidence="1">Adenylate kinase</fullName>
        <shortName evidence="1">AK</shortName>
        <ecNumber evidence="1">2.7.4.3</ecNumber>
    </recommendedName>
    <alternativeName>
        <fullName evidence="1">ATP-AMP transphosphorylase</fullName>
    </alternativeName>
    <alternativeName>
        <fullName evidence="1">ATP:AMP phosphotransferase</fullName>
    </alternativeName>
    <alternativeName>
        <fullName evidence="1">Adenylate monophosphate kinase</fullName>
    </alternativeName>
</protein>
<reference key="1">
    <citation type="journal article" date="2003" name="Proc. Natl. Acad. Sci. U.S.A.">
        <title>Complete genome sequence of the marine planctomycete Pirellula sp. strain 1.</title>
        <authorList>
            <person name="Gloeckner F.O."/>
            <person name="Kube M."/>
            <person name="Bauer M."/>
            <person name="Teeling H."/>
            <person name="Lombardot T."/>
            <person name="Ludwig W."/>
            <person name="Gade D."/>
            <person name="Beck A."/>
            <person name="Borzym K."/>
            <person name="Heitmann K."/>
            <person name="Rabus R."/>
            <person name="Schlesner H."/>
            <person name="Amann R."/>
            <person name="Reinhardt R."/>
        </authorList>
    </citation>
    <scope>NUCLEOTIDE SEQUENCE [LARGE SCALE GENOMIC DNA]</scope>
    <source>
        <strain>DSM 10527 / NCIMB 13988 / SH1</strain>
    </source>
</reference>
<gene>
    <name evidence="1" type="primary">adk</name>
    <name type="ordered locus">RB7867</name>
</gene>
<name>KAD_RHOBA</name>
<dbReference type="EC" id="2.7.4.3" evidence="1"/>
<dbReference type="EMBL" id="BX294146">
    <property type="protein sequence ID" value="CAD75619.1"/>
    <property type="status" value="ALT_INIT"/>
    <property type="molecule type" value="Genomic_DNA"/>
</dbReference>
<dbReference type="RefSeq" id="NP_868072.1">
    <property type="nucleotide sequence ID" value="NC_005027.1"/>
</dbReference>
<dbReference type="RefSeq" id="WP_164922106.1">
    <property type="nucleotide sequence ID" value="NC_005027.1"/>
</dbReference>
<dbReference type="SMR" id="Q7UN00"/>
<dbReference type="FunCoup" id="Q7UN00">
    <property type="interactions" value="524"/>
</dbReference>
<dbReference type="STRING" id="243090.RB7867"/>
<dbReference type="EnsemblBacteria" id="CAD75619">
    <property type="protein sequence ID" value="CAD75619"/>
    <property type="gene ID" value="RB7867"/>
</dbReference>
<dbReference type="KEGG" id="rba:RB7867"/>
<dbReference type="PATRIC" id="fig|243090.15.peg.3804"/>
<dbReference type="eggNOG" id="COG0563">
    <property type="taxonomic scope" value="Bacteria"/>
</dbReference>
<dbReference type="HOGENOM" id="CLU_032354_4_1_0"/>
<dbReference type="InParanoid" id="Q7UN00"/>
<dbReference type="OrthoDB" id="9805030at2"/>
<dbReference type="UniPathway" id="UPA00588">
    <property type="reaction ID" value="UER00649"/>
</dbReference>
<dbReference type="Proteomes" id="UP000001025">
    <property type="component" value="Chromosome"/>
</dbReference>
<dbReference type="GO" id="GO:0005737">
    <property type="term" value="C:cytoplasm"/>
    <property type="evidence" value="ECO:0000318"/>
    <property type="project" value="GO_Central"/>
</dbReference>
<dbReference type="GO" id="GO:0005829">
    <property type="term" value="C:cytosol"/>
    <property type="evidence" value="ECO:0000318"/>
    <property type="project" value="GO_Central"/>
</dbReference>
<dbReference type="GO" id="GO:0004017">
    <property type="term" value="F:adenylate kinase activity"/>
    <property type="evidence" value="ECO:0000318"/>
    <property type="project" value="GO_Central"/>
</dbReference>
<dbReference type="GO" id="GO:0005524">
    <property type="term" value="F:ATP binding"/>
    <property type="evidence" value="ECO:0007669"/>
    <property type="project" value="UniProtKB-UniRule"/>
</dbReference>
<dbReference type="GO" id="GO:0004550">
    <property type="term" value="F:nucleoside diphosphate kinase activity"/>
    <property type="evidence" value="ECO:0000318"/>
    <property type="project" value="GO_Central"/>
</dbReference>
<dbReference type="GO" id="GO:0044209">
    <property type="term" value="P:AMP salvage"/>
    <property type="evidence" value="ECO:0007669"/>
    <property type="project" value="UniProtKB-UniRule"/>
</dbReference>
<dbReference type="GO" id="GO:0009132">
    <property type="term" value="P:nucleoside diphosphate metabolic process"/>
    <property type="evidence" value="ECO:0000318"/>
    <property type="project" value="GO_Central"/>
</dbReference>
<dbReference type="GO" id="GO:0009123">
    <property type="term" value="P:nucleoside monophosphate metabolic process"/>
    <property type="evidence" value="ECO:0000318"/>
    <property type="project" value="GO_Central"/>
</dbReference>
<dbReference type="CDD" id="cd01428">
    <property type="entry name" value="ADK"/>
    <property type="match status" value="1"/>
</dbReference>
<dbReference type="Gene3D" id="3.40.50.300">
    <property type="entry name" value="P-loop containing nucleotide triphosphate hydrolases"/>
    <property type="match status" value="1"/>
</dbReference>
<dbReference type="HAMAP" id="MF_00235">
    <property type="entry name" value="Adenylate_kinase_Adk"/>
    <property type="match status" value="1"/>
</dbReference>
<dbReference type="InterPro" id="IPR000850">
    <property type="entry name" value="Adenylat/UMP-CMP_kin"/>
</dbReference>
<dbReference type="InterPro" id="IPR033690">
    <property type="entry name" value="Adenylat_kinase_CS"/>
</dbReference>
<dbReference type="InterPro" id="IPR027417">
    <property type="entry name" value="P-loop_NTPase"/>
</dbReference>
<dbReference type="PANTHER" id="PTHR23359">
    <property type="entry name" value="NUCLEOTIDE KINASE"/>
    <property type="match status" value="1"/>
</dbReference>
<dbReference type="Pfam" id="PF00406">
    <property type="entry name" value="ADK"/>
    <property type="match status" value="1"/>
</dbReference>
<dbReference type="PRINTS" id="PR00094">
    <property type="entry name" value="ADENYLTKNASE"/>
</dbReference>
<dbReference type="SUPFAM" id="SSF52540">
    <property type="entry name" value="P-loop containing nucleoside triphosphate hydrolases"/>
    <property type="match status" value="1"/>
</dbReference>
<dbReference type="PROSITE" id="PS00113">
    <property type="entry name" value="ADENYLATE_KINASE"/>
    <property type="match status" value="1"/>
</dbReference>
<keyword id="KW-0067">ATP-binding</keyword>
<keyword id="KW-0963">Cytoplasm</keyword>
<keyword id="KW-0418">Kinase</keyword>
<keyword id="KW-0545">Nucleotide biosynthesis</keyword>
<keyword id="KW-0547">Nucleotide-binding</keyword>
<keyword id="KW-1185">Reference proteome</keyword>
<keyword id="KW-0808">Transferase</keyword>
<organism>
    <name type="scientific">Rhodopirellula baltica (strain DSM 10527 / NCIMB 13988 / SH1)</name>
    <dbReference type="NCBI Taxonomy" id="243090"/>
    <lineage>
        <taxon>Bacteria</taxon>
        <taxon>Pseudomonadati</taxon>
        <taxon>Planctomycetota</taxon>
        <taxon>Planctomycetia</taxon>
        <taxon>Pirellulales</taxon>
        <taxon>Pirellulaceae</taxon>
        <taxon>Rhodopirellula</taxon>
    </lineage>
</organism>
<evidence type="ECO:0000255" key="1">
    <source>
        <dbReference type="HAMAP-Rule" id="MF_00235"/>
    </source>
</evidence>
<evidence type="ECO:0000305" key="2"/>
<accession>Q7UN00</accession>
<feature type="chain" id="PRO_0000158837" description="Adenylate kinase">
    <location>
        <begin position="1"/>
        <end position="192"/>
    </location>
</feature>
<feature type="region of interest" description="NMP" evidence="1">
    <location>
        <begin position="30"/>
        <end position="56"/>
    </location>
</feature>
<feature type="region of interest" description="LID" evidence="1">
    <location>
        <begin position="123"/>
        <end position="133"/>
    </location>
</feature>
<feature type="binding site" evidence="1">
    <location>
        <begin position="10"/>
        <end position="15"/>
    </location>
    <ligand>
        <name>ATP</name>
        <dbReference type="ChEBI" id="CHEBI:30616"/>
    </ligand>
</feature>
<feature type="binding site" evidence="1">
    <location>
        <position position="31"/>
    </location>
    <ligand>
        <name>AMP</name>
        <dbReference type="ChEBI" id="CHEBI:456215"/>
    </ligand>
</feature>
<feature type="binding site" evidence="1">
    <location>
        <position position="36"/>
    </location>
    <ligand>
        <name>AMP</name>
        <dbReference type="ChEBI" id="CHEBI:456215"/>
    </ligand>
</feature>
<feature type="binding site" evidence="1">
    <location>
        <begin position="82"/>
        <end position="85"/>
    </location>
    <ligand>
        <name>AMP</name>
        <dbReference type="ChEBI" id="CHEBI:456215"/>
    </ligand>
</feature>
<feature type="binding site" evidence="1">
    <location>
        <position position="89"/>
    </location>
    <ligand>
        <name>AMP</name>
        <dbReference type="ChEBI" id="CHEBI:456215"/>
    </ligand>
</feature>
<feature type="binding site" evidence="1">
    <location>
        <position position="124"/>
    </location>
    <ligand>
        <name>ATP</name>
        <dbReference type="ChEBI" id="CHEBI:30616"/>
    </ligand>
</feature>
<feature type="binding site" evidence="1">
    <location>
        <position position="130"/>
    </location>
    <ligand>
        <name>AMP</name>
        <dbReference type="ChEBI" id="CHEBI:456215"/>
    </ligand>
</feature>
<feature type="binding site" evidence="1">
    <location>
        <position position="141"/>
    </location>
    <ligand>
        <name>AMP</name>
        <dbReference type="ChEBI" id="CHEBI:456215"/>
    </ligand>
</feature>
<feature type="binding site" evidence="1">
    <location>
        <position position="169"/>
    </location>
    <ligand>
        <name>ATP</name>
        <dbReference type="ChEBI" id="CHEBI:30616"/>
    </ligand>
</feature>